<organism>
    <name type="scientific">Escherichia coli O8 (strain IAI1)</name>
    <dbReference type="NCBI Taxonomy" id="585034"/>
    <lineage>
        <taxon>Bacteria</taxon>
        <taxon>Pseudomonadati</taxon>
        <taxon>Pseudomonadota</taxon>
        <taxon>Gammaproteobacteria</taxon>
        <taxon>Enterobacterales</taxon>
        <taxon>Enterobacteriaceae</taxon>
        <taxon>Escherichia</taxon>
    </lineage>
</organism>
<gene>
    <name evidence="2" type="primary">aes</name>
    <name type="ordered locus">ECIAI1_0479</name>
</gene>
<comment type="function">
    <text evidence="2">Displays esterase activity towards short chain fatty esters (acyl chain length of up to 8 carbons). Able to hydrolyze triacetylglycerol (triacetin) and tributyrylglycerol (tributyrin), but not trioleylglycerol (triolein) or cholesterol oleate. Negatively regulates MalT activity by antagonizing maltotriose binding. Inhibits MelA galactosidase activity.</text>
</comment>
<comment type="subunit">
    <text evidence="2">Homodimer. Interacts with MalT and MelA.</text>
</comment>
<comment type="subcellular location">
    <subcellularLocation>
        <location evidence="2">Cytoplasm</location>
    </subcellularLocation>
</comment>
<comment type="similarity">
    <text evidence="2">Belongs to the 'GDXG' lipolytic enzyme family.</text>
</comment>
<evidence type="ECO:0000250" key="1">
    <source>
        <dbReference type="UniProtKB" id="Q5NUF3"/>
    </source>
</evidence>
<evidence type="ECO:0000255" key="2">
    <source>
        <dbReference type="HAMAP-Rule" id="MF_01958"/>
    </source>
</evidence>
<keyword id="KW-0963">Cytoplasm</keyword>
<keyword id="KW-0378">Hydrolase</keyword>
<keyword id="KW-0719">Serine esterase</keyword>
<sequence>MKPENKLPVLDLISAEMKTVVNTLQPDLPSWPATGTIAEQRQYYTLERRFWNAGAPEMATRAYMVPTKYGQVETRLFCPQPDSPATLFYLHGGGFILGNLDTHDRIMRLLASYSQCTVIGIDYTLSPEARFPQAIEEIVAACCYFHQQAEDYQINMSRIGFAGDSAGAMLALASALWLRDKQIDCGKIAGVLLWYGLYGLRDSVTRRLLGGVWDGLTQQDLQMYEEAYLSNDADRESPYYCLFNNDLTREVPPCFIAGAEFDPLLDDSRLLYQTLAAHQQPCEFKLYPGTLHAFLHYSRMMKTADEALRDGAQFFTAQL</sequence>
<proteinExistence type="inferred from homology"/>
<reference key="1">
    <citation type="journal article" date="2009" name="PLoS Genet.">
        <title>Organised genome dynamics in the Escherichia coli species results in highly diverse adaptive paths.</title>
        <authorList>
            <person name="Touchon M."/>
            <person name="Hoede C."/>
            <person name="Tenaillon O."/>
            <person name="Barbe V."/>
            <person name="Baeriswyl S."/>
            <person name="Bidet P."/>
            <person name="Bingen E."/>
            <person name="Bonacorsi S."/>
            <person name="Bouchier C."/>
            <person name="Bouvet O."/>
            <person name="Calteau A."/>
            <person name="Chiapello H."/>
            <person name="Clermont O."/>
            <person name="Cruveiller S."/>
            <person name="Danchin A."/>
            <person name="Diard M."/>
            <person name="Dossat C."/>
            <person name="Karoui M.E."/>
            <person name="Frapy E."/>
            <person name="Garry L."/>
            <person name="Ghigo J.M."/>
            <person name="Gilles A.M."/>
            <person name="Johnson J."/>
            <person name="Le Bouguenec C."/>
            <person name="Lescat M."/>
            <person name="Mangenot S."/>
            <person name="Martinez-Jehanne V."/>
            <person name="Matic I."/>
            <person name="Nassif X."/>
            <person name="Oztas S."/>
            <person name="Petit M.A."/>
            <person name="Pichon C."/>
            <person name="Rouy Z."/>
            <person name="Ruf C.S."/>
            <person name="Schneider D."/>
            <person name="Tourret J."/>
            <person name="Vacherie B."/>
            <person name="Vallenet D."/>
            <person name="Medigue C."/>
            <person name="Rocha E.P.C."/>
            <person name="Denamur E."/>
        </authorList>
    </citation>
    <scope>NUCLEOTIDE SEQUENCE [LARGE SCALE GENOMIC DNA]</scope>
    <source>
        <strain>IAI1</strain>
    </source>
</reference>
<protein>
    <recommendedName>
        <fullName evidence="2">Acetyl esterase</fullName>
        <ecNumber evidence="2">3.1.1.-</ecNumber>
    </recommendedName>
</protein>
<dbReference type="EC" id="3.1.1.-" evidence="2"/>
<dbReference type="EMBL" id="CU928160">
    <property type="protein sequence ID" value="CAQ97351.1"/>
    <property type="molecule type" value="Genomic_DNA"/>
</dbReference>
<dbReference type="RefSeq" id="WP_000801838.1">
    <property type="nucleotide sequence ID" value="NC_011741.1"/>
</dbReference>
<dbReference type="SMR" id="B7M3W8"/>
<dbReference type="ESTHER" id="ecoli-Aes">
    <property type="family name" value="Acetyl_esterase"/>
</dbReference>
<dbReference type="MEROPS" id="S09.A47"/>
<dbReference type="GeneID" id="93776974"/>
<dbReference type="KEGG" id="ecr:ECIAI1_0479"/>
<dbReference type="HOGENOM" id="CLU_012494_6_4_6"/>
<dbReference type="GO" id="GO:0005737">
    <property type="term" value="C:cytoplasm"/>
    <property type="evidence" value="ECO:0007669"/>
    <property type="project" value="UniProtKB-SubCell"/>
</dbReference>
<dbReference type="GO" id="GO:0052689">
    <property type="term" value="F:carboxylic ester hydrolase activity"/>
    <property type="evidence" value="ECO:0007669"/>
    <property type="project" value="UniProtKB-UniRule"/>
</dbReference>
<dbReference type="FunFam" id="3.40.50.1820:FF:000035">
    <property type="entry name" value="Acetyl esterase"/>
    <property type="match status" value="1"/>
</dbReference>
<dbReference type="Gene3D" id="3.40.50.1820">
    <property type="entry name" value="alpha/beta hydrolase"/>
    <property type="match status" value="1"/>
</dbReference>
<dbReference type="HAMAP" id="MF_01958">
    <property type="entry name" value="Acetyl_esterase"/>
    <property type="match status" value="1"/>
</dbReference>
<dbReference type="InterPro" id="IPR013094">
    <property type="entry name" value="AB_hydrolase_3"/>
</dbReference>
<dbReference type="InterPro" id="IPR029058">
    <property type="entry name" value="AB_hydrolase_fold"/>
</dbReference>
<dbReference type="InterPro" id="IPR023508">
    <property type="entry name" value="Acetyl_esterase"/>
</dbReference>
<dbReference type="InterPro" id="IPR050300">
    <property type="entry name" value="GDXG_lipolytic_enzyme"/>
</dbReference>
<dbReference type="InterPro" id="IPR002168">
    <property type="entry name" value="Lipase_GDXG_HIS_AS"/>
</dbReference>
<dbReference type="InterPro" id="IPR033140">
    <property type="entry name" value="Lipase_GDXG_put_SER_AS"/>
</dbReference>
<dbReference type="NCBIfam" id="NF007547">
    <property type="entry name" value="PRK10162.1"/>
    <property type="match status" value="1"/>
</dbReference>
<dbReference type="PANTHER" id="PTHR48081">
    <property type="entry name" value="AB HYDROLASE SUPERFAMILY PROTEIN C4A8.06C"/>
    <property type="match status" value="1"/>
</dbReference>
<dbReference type="PANTHER" id="PTHR48081:SF8">
    <property type="entry name" value="ALPHA_BETA HYDROLASE FOLD-3 DOMAIN-CONTAINING PROTEIN-RELATED"/>
    <property type="match status" value="1"/>
</dbReference>
<dbReference type="Pfam" id="PF07859">
    <property type="entry name" value="Abhydrolase_3"/>
    <property type="match status" value="1"/>
</dbReference>
<dbReference type="SUPFAM" id="SSF53474">
    <property type="entry name" value="alpha/beta-Hydrolases"/>
    <property type="match status" value="1"/>
</dbReference>
<dbReference type="PROSITE" id="PS01173">
    <property type="entry name" value="LIPASE_GDXG_HIS"/>
    <property type="match status" value="1"/>
</dbReference>
<dbReference type="PROSITE" id="PS01174">
    <property type="entry name" value="LIPASE_GDXG_SER"/>
    <property type="match status" value="1"/>
</dbReference>
<feature type="chain" id="PRO_1000188981" description="Acetyl esterase">
    <location>
        <begin position="1"/>
        <end position="319"/>
    </location>
</feature>
<feature type="short sequence motif" description="Involved in the stabilization of the negatively charged intermediate by the formation of the oxyanion hole" evidence="1">
    <location>
        <begin position="91"/>
        <end position="93"/>
    </location>
</feature>
<feature type="active site" evidence="2">
    <location>
        <position position="165"/>
    </location>
</feature>
<feature type="active site" evidence="2">
    <location>
        <position position="262"/>
    </location>
</feature>
<feature type="active site" evidence="2">
    <location>
        <position position="292"/>
    </location>
</feature>
<name>AES_ECO8A</name>
<accession>B7M3W8</accession>